<protein>
    <recommendedName>
        <fullName>Histone acetyltransferase esa1</fullName>
        <ecNumber evidence="3">2.3.1.48</ecNumber>
    </recommendedName>
    <alternativeName>
        <fullName evidence="7">Protein 2-hydroxyisobutyryltransferase esa1</fullName>
        <ecNumber evidence="2">2.3.1.-</ecNumber>
    </alternativeName>
    <alternativeName>
        <fullName evidence="7">Protein acetyltransferase esa1</fullName>
        <ecNumber evidence="3">2.3.1.-</ecNumber>
    </alternativeName>
    <alternativeName>
        <fullName evidence="7">Protein crotonyltransferase esa1</fullName>
        <ecNumber evidence="3">2.3.1.-</ecNumber>
    </alternativeName>
</protein>
<evidence type="ECO:0000250" key="1"/>
<evidence type="ECO:0000250" key="2">
    <source>
        <dbReference type="UniProtKB" id="O94446"/>
    </source>
</evidence>
<evidence type="ECO:0000250" key="3">
    <source>
        <dbReference type="UniProtKB" id="Q08649"/>
    </source>
</evidence>
<evidence type="ECO:0000255" key="4"/>
<evidence type="ECO:0000255" key="5">
    <source>
        <dbReference type="PROSITE-ProRule" id="PRU01063"/>
    </source>
</evidence>
<evidence type="ECO:0000256" key="6">
    <source>
        <dbReference type="SAM" id="MobiDB-lite"/>
    </source>
</evidence>
<evidence type="ECO:0000305" key="7"/>
<sequence length="508" mass="58152">MGVRDSHGEAAGTPDPVEKGIATLNTIRIGVKAMVHKDGALRKAEILSIKQRKDGLAFYVHYVDFNKRLDEWVASSRLDLSQEVEWPQPEKPEKKKSGPAKAPSKNKRVRAGSRDVSATPDTLTGKNTNVGKAQRPSKAGGKENRGDETPADLSMLASEAVSADGTPKAVSEDIDMMDASFTDAKEIKEEERALGLMSREEEIEKLRTSGSMTQNPTEVHRVRNLDRLQMGKYDIEPWYFSPYPASFSDAEVVYIDEFCLSYFDNKRAFERHRTKCTLTHPPGNEIYRDDNISFFEVDGRRQRTWCRNLCLLSKLFLDHKTLYYDVDPFLFYCMCTRDETGCHLVGYFSKEKESGEGYNLACILTLPQYQRRGYGRLLISFSYELSKREGKVGSPEKPLSDLGLLGYRQYWRETLVEILLDSGRETVSENELAMLTSMTEKDVHETLVTFKMLRYNKGQWIIVLTDEVIEERNKRLEKEKIKGSRKIDPARLQWKPPVFTASSRTWNW</sequence>
<feature type="chain" id="PRO_0000413170" description="Histone acetyltransferase esa1">
    <location>
        <begin position="1"/>
        <end position="508"/>
    </location>
</feature>
<feature type="domain" description="Tudor-knot" evidence="4">
    <location>
        <begin position="27"/>
        <end position="80"/>
    </location>
</feature>
<feature type="domain" description="MYST-type HAT" evidence="5">
    <location>
        <begin position="220"/>
        <end position="496"/>
    </location>
</feature>
<feature type="zinc finger region" description="C2HC MYST-type; degenerate" evidence="5">
    <location>
        <begin position="253"/>
        <end position="278"/>
    </location>
</feature>
<feature type="region of interest" description="Disordered" evidence="6">
    <location>
        <begin position="84"/>
        <end position="150"/>
    </location>
</feature>
<feature type="short sequence motif" description="ESA1-RPD3 motif" evidence="1">
    <location>
        <begin position="303"/>
        <end position="324"/>
    </location>
</feature>
<feature type="compositionally biased region" description="Polar residues" evidence="6">
    <location>
        <begin position="119"/>
        <end position="131"/>
    </location>
</feature>
<feature type="active site" description="Proton donor/acceptor" evidence="3">
    <location>
        <position position="396"/>
    </location>
</feature>
<feature type="binding site" evidence="3">
    <location>
        <begin position="361"/>
        <end position="365"/>
    </location>
    <ligand>
        <name>acetyl-CoA</name>
        <dbReference type="ChEBI" id="CHEBI:57288"/>
    </ligand>
</feature>
<feature type="binding site" evidence="3">
    <location>
        <begin position="370"/>
        <end position="376"/>
    </location>
    <ligand>
        <name>acetyl-CoA</name>
        <dbReference type="ChEBI" id="CHEBI:57288"/>
    </ligand>
</feature>
<feature type="binding site" evidence="3">
    <location>
        <position position="400"/>
    </location>
    <ligand>
        <name>acetyl-CoA</name>
        <dbReference type="ChEBI" id="CHEBI:57288"/>
    </ligand>
</feature>
<feature type="site" description="Important for catalytic activity" evidence="3">
    <location>
        <position position="362"/>
    </location>
</feature>
<feature type="modified residue" description="N6-acetyllysine; by autocatalysis" evidence="3">
    <location>
        <position position="320"/>
    </location>
</feature>
<reference key="1">
    <citation type="journal article" date="2005" name="Nature">
        <title>Sequencing of Aspergillus nidulans and comparative analysis with A. fumigatus and A. oryzae.</title>
        <authorList>
            <person name="Galagan J.E."/>
            <person name="Calvo S.E."/>
            <person name="Cuomo C."/>
            <person name="Ma L.-J."/>
            <person name="Wortman J.R."/>
            <person name="Batzoglou S."/>
            <person name="Lee S.-I."/>
            <person name="Bastuerkmen M."/>
            <person name="Spevak C.C."/>
            <person name="Clutterbuck J."/>
            <person name="Kapitonov V."/>
            <person name="Jurka J."/>
            <person name="Scazzocchio C."/>
            <person name="Farman M.L."/>
            <person name="Butler J."/>
            <person name="Purcell S."/>
            <person name="Harris S."/>
            <person name="Braus G.H."/>
            <person name="Draht O."/>
            <person name="Busch S."/>
            <person name="D'Enfert C."/>
            <person name="Bouchier C."/>
            <person name="Goldman G.H."/>
            <person name="Bell-Pedersen D."/>
            <person name="Griffiths-Jones S."/>
            <person name="Doonan J.H."/>
            <person name="Yu J."/>
            <person name="Vienken K."/>
            <person name="Pain A."/>
            <person name="Freitag M."/>
            <person name="Selker E.U."/>
            <person name="Archer D.B."/>
            <person name="Penalva M.A."/>
            <person name="Oakley B.R."/>
            <person name="Momany M."/>
            <person name="Tanaka T."/>
            <person name="Kumagai T."/>
            <person name="Asai K."/>
            <person name="Machida M."/>
            <person name="Nierman W.C."/>
            <person name="Denning D.W."/>
            <person name="Caddick M.X."/>
            <person name="Hynes M."/>
            <person name="Paoletti M."/>
            <person name="Fischer R."/>
            <person name="Miller B.L."/>
            <person name="Dyer P.S."/>
            <person name="Sachs M.S."/>
            <person name="Osmani S.A."/>
            <person name="Birren B.W."/>
        </authorList>
    </citation>
    <scope>NUCLEOTIDE SEQUENCE [LARGE SCALE GENOMIC DNA]</scope>
    <source>
        <strain>FGSC A4 / ATCC 38163 / CBS 112.46 / NRRL 194 / M139</strain>
    </source>
</reference>
<reference key="2">
    <citation type="journal article" date="2009" name="Fungal Genet. Biol.">
        <title>The 2008 update of the Aspergillus nidulans genome annotation: a community effort.</title>
        <authorList>
            <person name="Wortman J.R."/>
            <person name="Gilsenan J.M."/>
            <person name="Joardar V."/>
            <person name="Deegan J."/>
            <person name="Clutterbuck J."/>
            <person name="Andersen M.R."/>
            <person name="Archer D."/>
            <person name="Bencina M."/>
            <person name="Braus G."/>
            <person name="Coutinho P."/>
            <person name="von Dohren H."/>
            <person name="Doonan J."/>
            <person name="Driessen A.J."/>
            <person name="Durek P."/>
            <person name="Espeso E."/>
            <person name="Fekete E."/>
            <person name="Flipphi M."/>
            <person name="Estrada C.G."/>
            <person name="Geysens S."/>
            <person name="Goldman G."/>
            <person name="de Groot P.W."/>
            <person name="Hansen K."/>
            <person name="Harris S.D."/>
            <person name="Heinekamp T."/>
            <person name="Helmstaedt K."/>
            <person name="Henrissat B."/>
            <person name="Hofmann G."/>
            <person name="Homan T."/>
            <person name="Horio T."/>
            <person name="Horiuchi H."/>
            <person name="James S."/>
            <person name="Jones M."/>
            <person name="Karaffa L."/>
            <person name="Karanyi Z."/>
            <person name="Kato M."/>
            <person name="Keller N."/>
            <person name="Kelly D.E."/>
            <person name="Kiel J.A."/>
            <person name="Kim J.M."/>
            <person name="van der Klei I.J."/>
            <person name="Klis F.M."/>
            <person name="Kovalchuk A."/>
            <person name="Krasevec N."/>
            <person name="Kubicek C.P."/>
            <person name="Liu B."/>
            <person name="Maccabe A."/>
            <person name="Meyer V."/>
            <person name="Mirabito P."/>
            <person name="Miskei M."/>
            <person name="Mos M."/>
            <person name="Mullins J."/>
            <person name="Nelson D.R."/>
            <person name="Nielsen J."/>
            <person name="Oakley B.R."/>
            <person name="Osmani S.A."/>
            <person name="Pakula T."/>
            <person name="Paszewski A."/>
            <person name="Paulsen I."/>
            <person name="Pilsyk S."/>
            <person name="Pocsi I."/>
            <person name="Punt P.J."/>
            <person name="Ram A.F."/>
            <person name="Ren Q."/>
            <person name="Robellet X."/>
            <person name="Robson G."/>
            <person name="Seiboth B."/>
            <person name="van Solingen P."/>
            <person name="Specht T."/>
            <person name="Sun J."/>
            <person name="Taheri-Talesh N."/>
            <person name="Takeshita N."/>
            <person name="Ussery D."/>
            <person name="vanKuyk P.A."/>
            <person name="Visser H."/>
            <person name="van de Vondervoort P.J."/>
            <person name="de Vries R.P."/>
            <person name="Walton J."/>
            <person name="Xiang X."/>
            <person name="Xiong Y."/>
            <person name="Zeng A.P."/>
            <person name="Brandt B.W."/>
            <person name="Cornell M.J."/>
            <person name="van den Hondel C.A."/>
            <person name="Visser J."/>
            <person name="Oliver S.G."/>
            <person name="Turner G."/>
        </authorList>
    </citation>
    <scope>GENOME REANNOTATION</scope>
    <source>
        <strain>FGSC A4 / ATCC 38163 / CBS 112.46 / NRRL 194 / M139</strain>
    </source>
</reference>
<organism>
    <name type="scientific">Emericella nidulans (strain FGSC A4 / ATCC 38163 / CBS 112.46 / NRRL 194 / M139)</name>
    <name type="common">Aspergillus nidulans</name>
    <dbReference type="NCBI Taxonomy" id="227321"/>
    <lineage>
        <taxon>Eukaryota</taxon>
        <taxon>Fungi</taxon>
        <taxon>Dikarya</taxon>
        <taxon>Ascomycota</taxon>
        <taxon>Pezizomycotina</taxon>
        <taxon>Eurotiomycetes</taxon>
        <taxon>Eurotiomycetidae</taxon>
        <taxon>Eurotiales</taxon>
        <taxon>Aspergillaceae</taxon>
        <taxon>Aspergillus</taxon>
        <taxon>Aspergillus subgen. Nidulantes</taxon>
    </lineage>
</organism>
<keyword id="KW-0007">Acetylation</keyword>
<keyword id="KW-0010">Activator</keyword>
<keyword id="KW-0156">Chromatin regulator</keyword>
<keyword id="KW-0158">Chromosome</keyword>
<keyword id="KW-0227">DNA damage</keyword>
<keyword id="KW-0234">DNA repair</keyword>
<keyword id="KW-0539">Nucleus</keyword>
<keyword id="KW-1185">Reference proteome</keyword>
<keyword id="KW-0804">Transcription</keyword>
<keyword id="KW-0805">Transcription regulation</keyword>
<keyword id="KW-0808">Transferase</keyword>
<accession>C8VBH4</accession>
<accession>Q5AW35</accession>
<dbReference type="EC" id="2.3.1.48" evidence="3"/>
<dbReference type="EC" id="2.3.1.-" evidence="2 3"/>
<dbReference type="EMBL" id="AACD01000129">
    <property type="protein sequence ID" value="EAA62075.1"/>
    <property type="status" value="ALT_SEQ"/>
    <property type="molecule type" value="Genomic_DNA"/>
</dbReference>
<dbReference type="EMBL" id="BN001304">
    <property type="protein sequence ID" value="CBF79494.1"/>
    <property type="molecule type" value="Genomic_DNA"/>
</dbReference>
<dbReference type="RefSeq" id="XP_680764.1">
    <property type="nucleotide sequence ID" value="XM_675672.1"/>
</dbReference>
<dbReference type="SMR" id="C8VBH4"/>
<dbReference type="FunCoup" id="C8VBH4">
    <property type="interactions" value="915"/>
</dbReference>
<dbReference type="STRING" id="227321.C8VBH4"/>
<dbReference type="EnsemblFungi" id="CBF79494">
    <property type="protein sequence ID" value="CBF79494"/>
    <property type="gene ID" value="ANIA_10956"/>
</dbReference>
<dbReference type="VEuPathDB" id="FungiDB:AN10956"/>
<dbReference type="eggNOG" id="KOG2747">
    <property type="taxonomic scope" value="Eukaryota"/>
</dbReference>
<dbReference type="HOGENOM" id="CLU_005700_0_0_1"/>
<dbReference type="InParanoid" id="C8VBH4"/>
<dbReference type="OMA" id="QYQRHGY"/>
<dbReference type="OrthoDB" id="787137at2759"/>
<dbReference type="Proteomes" id="UP000000560">
    <property type="component" value="Chromosome IV"/>
</dbReference>
<dbReference type="GO" id="GO:0000785">
    <property type="term" value="C:chromatin"/>
    <property type="evidence" value="ECO:0000318"/>
    <property type="project" value="GO_Central"/>
</dbReference>
<dbReference type="GO" id="GO:0035267">
    <property type="term" value="C:NuA4 histone acetyltransferase complex"/>
    <property type="evidence" value="ECO:0007669"/>
    <property type="project" value="EnsemblFungi"/>
</dbReference>
<dbReference type="GO" id="GO:0000786">
    <property type="term" value="C:nucleosome"/>
    <property type="evidence" value="ECO:0007669"/>
    <property type="project" value="EnsemblFungi"/>
</dbReference>
<dbReference type="GO" id="GO:0005634">
    <property type="term" value="C:nucleus"/>
    <property type="evidence" value="ECO:0000318"/>
    <property type="project" value="GO_Central"/>
</dbReference>
<dbReference type="GO" id="GO:0032777">
    <property type="term" value="C:piccolo histone acetyltransferase complex"/>
    <property type="evidence" value="ECO:0007669"/>
    <property type="project" value="EnsemblFungi"/>
</dbReference>
<dbReference type="GO" id="GO:0003682">
    <property type="term" value="F:chromatin binding"/>
    <property type="evidence" value="ECO:0000318"/>
    <property type="project" value="GO_Central"/>
</dbReference>
<dbReference type="GO" id="GO:0004402">
    <property type="term" value="F:histone acetyltransferase activity"/>
    <property type="evidence" value="ECO:0000318"/>
    <property type="project" value="GO_Central"/>
</dbReference>
<dbReference type="GO" id="GO:0140068">
    <property type="term" value="F:histone crotonyltransferase activity"/>
    <property type="evidence" value="ECO:0007669"/>
    <property type="project" value="EnsemblFungi"/>
</dbReference>
<dbReference type="GO" id="GO:0043997">
    <property type="term" value="F:histone H4K12 acetyltransferase activity"/>
    <property type="evidence" value="ECO:0000315"/>
    <property type="project" value="AspGD"/>
</dbReference>
<dbReference type="GO" id="GO:0106226">
    <property type="term" value="F:peptide 2-hydroxyisobutyryltransferase activity"/>
    <property type="evidence" value="ECO:0007669"/>
    <property type="project" value="RHEA"/>
</dbReference>
<dbReference type="GO" id="GO:0003712">
    <property type="term" value="F:transcription coregulator activity"/>
    <property type="evidence" value="ECO:0000318"/>
    <property type="project" value="GO_Central"/>
</dbReference>
<dbReference type="GO" id="GO:0006281">
    <property type="term" value="P:DNA repair"/>
    <property type="evidence" value="ECO:0007669"/>
    <property type="project" value="UniProtKB-KW"/>
</dbReference>
<dbReference type="GO" id="GO:0006354">
    <property type="term" value="P:DNA-templated transcription elongation"/>
    <property type="evidence" value="ECO:0007669"/>
    <property type="project" value="EnsemblFungi"/>
</dbReference>
<dbReference type="GO" id="GO:0016239">
    <property type="term" value="P:positive regulation of macroautophagy"/>
    <property type="evidence" value="ECO:0007669"/>
    <property type="project" value="EnsemblFungi"/>
</dbReference>
<dbReference type="GO" id="GO:0032968">
    <property type="term" value="P:positive regulation of transcription elongation by RNA polymerase II"/>
    <property type="evidence" value="ECO:0007669"/>
    <property type="project" value="EnsemblFungi"/>
</dbReference>
<dbReference type="GO" id="GO:0010867">
    <property type="term" value="P:positive regulation of triglyceride biosynthetic process"/>
    <property type="evidence" value="ECO:0007669"/>
    <property type="project" value="EnsemblFungi"/>
</dbReference>
<dbReference type="GO" id="GO:0000183">
    <property type="term" value="P:rDNA heterochromatin formation"/>
    <property type="evidence" value="ECO:0007669"/>
    <property type="project" value="EnsemblFungi"/>
</dbReference>
<dbReference type="GO" id="GO:0051726">
    <property type="term" value="P:regulation of cell cycle"/>
    <property type="evidence" value="ECO:0007669"/>
    <property type="project" value="EnsemblFungi"/>
</dbReference>
<dbReference type="GO" id="GO:1900376">
    <property type="term" value="P:regulation of secondary metabolite biosynthetic process"/>
    <property type="evidence" value="ECO:0000315"/>
    <property type="project" value="AspGD"/>
</dbReference>
<dbReference type="GO" id="GO:0006357">
    <property type="term" value="P:regulation of transcription by RNA polymerase II"/>
    <property type="evidence" value="ECO:0000318"/>
    <property type="project" value="GO_Central"/>
</dbReference>
<dbReference type="CDD" id="cd04301">
    <property type="entry name" value="NAT_SF"/>
    <property type="match status" value="1"/>
</dbReference>
<dbReference type="FunFam" id="1.10.10.10:FF:000022">
    <property type="entry name" value="Histone acetyltransferase"/>
    <property type="match status" value="1"/>
</dbReference>
<dbReference type="FunFam" id="2.30.30.140:FF:000209">
    <property type="entry name" value="Histone acetyltransferase"/>
    <property type="match status" value="1"/>
</dbReference>
<dbReference type="FunFam" id="3.30.60.60:FF:000001">
    <property type="entry name" value="Histone acetyltransferase"/>
    <property type="match status" value="1"/>
</dbReference>
<dbReference type="FunFam" id="3.40.630.30:FF:000002">
    <property type="entry name" value="Histone acetyltransferase"/>
    <property type="match status" value="1"/>
</dbReference>
<dbReference type="Gene3D" id="2.30.30.140">
    <property type="match status" value="1"/>
</dbReference>
<dbReference type="Gene3D" id="3.40.630.30">
    <property type="match status" value="1"/>
</dbReference>
<dbReference type="Gene3D" id="3.30.60.60">
    <property type="entry name" value="N-acetyl transferase-like"/>
    <property type="match status" value="1"/>
</dbReference>
<dbReference type="Gene3D" id="1.10.10.10">
    <property type="entry name" value="Winged helix-like DNA-binding domain superfamily/Winged helix DNA-binding domain"/>
    <property type="match status" value="1"/>
</dbReference>
<dbReference type="InterPro" id="IPR016181">
    <property type="entry name" value="Acyl_CoA_acyltransferase"/>
</dbReference>
<dbReference type="InterPro" id="IPR016197">
    <property type="entry name" value="Chromo-like_dom_sf"/>
</dbReference>
<dbReference type="InterPro" id="IPR000953">
    <property type="entry name" value="Chromo/chromo_shadow_dom"/>
</dbReference>
<dbReference type="InterPro" id="IPR002717">
    <property type="entry name" value="HAT_MYST-type"/>
</dbReference>
<dbReference type="InterPro" id="IPR050603">
    <property type="entry name" value="MYST_HAT"/>
</dbReference>
<dbReference type="InterPro" id="IPR025995">
    <property type="entry name" value="Tudor-knot"/>
</dbReference>
<dbReference type="InterPro" id="IPR036388">
    <property type="entry name" value="WH-like_DNA-bd_sf"/>
</dbReference>
<dbReference type="InterPro" id="IPR040706">
    <property type="entry name" value="Zf-MYST"/>
</dbReference>
<dbReference type="PANTHER" id="PTHR10615">
    <property type="entry name" value="HISTONE ACETYLTRANSFERASE"/>
    <property type="match status" value="1"/>
</dbReference>
<dbReference type="PANTHER" id="PTHR10615:SF218">
    <property type="entry name" value="HISTONE ACETYLTRANSFERASE ESA1"/>
    <property type="match status" value="1"/>
</dbReference>
<dbReference type="Pfam" id="PF01853">
    <property type="entry name" value="MOZ_SAS"/>
    <property type="match status" value="1"/>
</dbReference>
<dbReference type="Pfam" id="PF11717">
    <property type="entry name" value="Tudor-knot"/>
    <property type="match status" value="1"/>
</dbReference>
<dbReference type="Pfam" id="PF17772">
    <property type="entry name" value="zf-MYST"/>
    <property type="match status" value="1"/>
</dbReference>
<dbReference type="SMART" id="SM00298">
    <property type="entry name" value="CHROMO"/>
    <property type="match status" value="1"/>
</dbReference>
<dbReference type="SUPFAM" id="SSF55729">
    <property type="entry name" value="Acyl-CoA N-acyltransferases (Nat)"/>
    <property type="match status" value="1"/>
</dbReference>
<dbReference type="SUPFAM" id="SSF54160">
    <property type="entry name" value="Chromo domain-like"/>
    <property type="match status" value="1"/>
</dbReference>
<dbReference type="PROSITE" id="PS51726">
    <property type="entry name" value="MYST_HAT"/>
    <property type="match status" value="1"/>
</dbReference>
<name>ESA1_EMENI</name>
<comment type="function">
    <text evidence="2 3">Catalytic component of the NuA4 histone acetyltransferase (HAT) complex which is involved in epigenetic transcriptional activation of selected genes principally by acetylation of nucleosomal histones H4, H3, H2B, H2A and H2A variant H2A.Z (By similarity). Acetylates histone H4 to form H4K5ac, H4K8ac, H4K12ac and H4K16ac, histone H3 to form H3K14ac, and histone H2A to form H2AK4ac and H2AK7ac (By similarity). The NuA4 complex is involved in the DNA damage response and is required for chromosome segregation. The NuA4 complex plays a direct role in repair of DNA double-strand breaks (DSBs) through homologous recombination (By similarity). Recruitment to promoters depends on H3K4me. Also acetylates non-histone proteins (By similarity). In addition to protein acetyltransferase, can use different acyl-CoA substrates, such as 2-hydroxyisobutanoyl-CoA (2-hydroxyisobutyryl-CoA) or (2E)-butenoyl-CoA (crotonyl-CoA), and is able to mediate protein 2-hydroxyisobutyrylation and crotonylation, respectively (By similarity).</text>
</comment>
<comment type="catalytic activity">
    <reaction evidence="2">
        <text>L-lysyl-[histone] + acetyl-CoA = N(6)-acetyl-L-lysyl-[histone] + CoA + H(+)</text>
        <dbReference type="Rhea" id="RHEA:21992"/>
        <dbReference type="Rhea" id="RHEA-COMP:9845"/>
        <dbReference type="Rhea" id="RHEA-COMP:11338"/>
        <dbReference type="ChEBI" id="CHEBI:15378"/>
        <dbReference type="ChEBI" id="CHEBI:29969"/>
        <dbReference type="ChEBI" id="CHEBI:57287"/>
        <dbReference type="ChEBI" id="CHEBI:57288"/>
        <dbReference type="ChEBI" id="CHEBI:61930"/>
        <dbReference type="EC" id="2.3.1.48"/>
    </reaction>
    <physiologicalReaction direction="left-to-right" evidence="2">
        <dbReference type="Rhea" id="RHEA:21993"/>
    </physiologicalReaction>
</comment>
<comment type="catalytic activity">
    <reaction evidence="3">
        <text>L-lysyl-[protein] + acetyl-CoA = N(6)-acetyl-L-lysyl-[protein] + CoA + H(+)</text>
        <dbReference type="Rhea" id="RHEA:45948"/>
        <dbReference type="Rhea" id="RHEA-COMP:9752"/>
        <dbReference type="Rhea" id="RHEA-COMP:10731"/>
        <dbReference type="ChEBI" id="CHEBI:15378"/>
        <dbReference type="ChEBI" id="CHEBI:29969"/>
        <dbReference type="ChEBI" id="CHEBI:57287"/>
        <dbReference type="ChEBI" id="CHEBI:57288"/>
        <dbReference type="ChEBI" id="CHEBI:61930"/>
    </reaction>
    <physiologicalReaction direction="left-to-right" evidence="3">
        <dbReference type="Rhea" id="RHEA:45949"/>
    </physiologicalReaction>
</comment>
<comment type="catalytic activity">
    <reaction evidence="2">
        <text>2-hydroxyisobutanoyl-CoA + L-lysyl-[protein] = N(6)-(2-hydroxyisobutanoyl)-L-lysyl-[protein] + CoA + H(+)</text>
        <dbReference type="Rhea" id="RHEA:24180"/>
        <dbReference type="Rhea" id="RHEA-COMP:9752"/>
        <dbReference type="Rhea" id="RHEA-COMP:15921"/>
        <dbReference type="ChEBI" id="CHEBI:15378"/>
        <dbReference type="ChEBI" id="CHEBI:29969"/>
        <dbReference type="ChEBI" id="CHEBI:57287"/>
        <dbReference type="ChEBI" id="CHEBI:131780"/>
        <dbReference type="ChEBI" id="CHEBI:144968"/>
    </reaction>
    <physiologicalReaction direction="left-to-right" evidence="2">
        <dbReference type="Rhea" id="RHEA:24181"/>
    </physiologicalReaction>
</comment>
<comment type="catalytic activity">
    <reaction evidence="3">
        <text>(2E)-butenoyl-CoA + L-lysyl-[protein] = N(6)-(2E)-butenoyl-L-lysyl-[protein] + CoA + H(+)</text>
        <dbReference type="Rhea" id="RHEA:53908"/>
        <dbReference type="Rhea" id="RHEA-COMP:9752"/>
        <dbReference type="Rhea" id="RHEA-COMP:13707"/>
        <dbReference type="ChEBI" id="CHEBI:15378"/>
        <dbReference type="ChEBI" id="CHEBI:29969"/>
        <dbReference type="ChEBI" id="CHEBI:57287"/>
        <dbReference type="ChEBI" id="CHEBI:57332"/>
        <dbReference type="ChEBI" id="CHEBI:137954"/>
    </reaction>
    <physiologicalReaction direction="left-to-right" evidence="3">
        <dbReference type="Rhea" id="RHEA:53909"/>
    </physiologicalReaction>
</comment>
<comment type="subunit">
    <text evidence="3">Component of the NuA4 histone acetyltransferase complex.</text>
</comment>
<comment type="subcellular location">
    <subcellularLocation>
        <location evidence="2">Nucleus</location>
    </subcellularLocation>
    <subcellularLocation>
        <location evidence="2">Chromosome</location>
    </subcellularLocation>
    <text evidence="2">Following DNA damage, localizes to sites of DNA damage, such as double stand breaks (DSBs).</text>
</comment>
<comment type="domain">
    <text evidence="3">The ESA1-RPD3 motif is common to ESA1 and RPD3 and is required for ESA1 histone acetyl-transferase (HAT) activity and RPD3 histone deacetylase (HDAC) activity.</text>
</comment>
<comment type="PTM">
    <text evidence="3">Autoacetylation at Lys-320 is required for proper function.</text>
</comment>
<comment type="similarity">
    <text evidence="7">Belongs to the MYST (SAS/MOZ) family.</text>
</comment>
<comment type="sequence caution" evidence="7">
    <conflict type="erroneous gene model prediction">
        <sequence resource="EMBL-CDS" id="EAA62075"/>
    </conflict>
    <text>The predicted gene AN7495 has been split into 2 genes: AN10944 and AN10956.</text>
</comment>
<proteinExistence type="inferred from homology"/>
<gene>
    <name type="primary">esa1</name>
    <name type="ORF">AN10956</name>
</gene>